<keyword id="KW-0460">Magnesium</keyword>
<keyword id="KW-0479">Metal-binding</keyword>
<keyword id="KW-0784">Thiamine biosynthesis</keyword>
<keyword id="KW-0808">Transferase</keyword>
<proteinExistence type="inferred from homology"/>
<name>THIE_LISIN</name>
<organism>
    <name type="scientific">Listeria innocua serovar 6a (strain ATCC BAA-680 / CLIP 11262)</name>
    <dbReference type="NCBI Taxonomy" id="272626"/>
    <lineage>
        <taxon>Bacteria</taxon>
        <taxon>Bacillati</taxon>
        <taxon>Bacillota</taxon>
        <taxon>Bacilli</taxon>
        <taxon>Bacillales</taxon>
        <taxon>Listeriaceae</taxon>
        <taxon>Listeria</taxon>
    </lineage>
</organism>
<protein>
    <recommendedName>
        <fullName evidence="1">Thiamine-phosphate synthase</fullName>
        <shortName evidence="1">TP synthase</shortName>
        <shortName evidence="1">TPS</shortName>
        <ecNumber evidence="1">2.5.1.3</ecNumber>
    </recommendedName>
    <alternativeName>
        <fullName evidence="1">Thiamine-phosphate pyrophosphorylase</fullName>
        <shortName evidence="1">TMP pyrophosphorylase</shortName>
        <shortName evidence="1">TMP-PPase</shortName>
    </alternativeName>
</protein>
<gene>
    <name evidence="1" type="primary">thiE</name>
    <name type="ordered locus">lin0343</name>
</gene>
<sequence>MRAELAVYFIAGTQDIVRGTLPSVLEEALKAGITCFQYREKGAGALQTASERKEMALECQQLCAKYQVPFIINDDVALALEIGADGIHVGQNDEEIRQVIASCAGKMKIGLSVHSVSEAEEAERLGSVDYIGVGPIFPTISKADAEPVSGTAILEEIRRAGIKLPIVGIGGINETNSAEVLTAGADGVSVISAITRSEDCQSVIKQLKNPGSPS</sequence>
<dbReference type="EC" id="2.5.1.3" evidence="1"/>
<dbReference type="EMBL" id="AL596164">
    <property type="protein sequence ID" value="CAC95576.1"/>
    <property type="molecule type" value="Genomic_DNA"/>
</dbReference>
<dbReference type="PIR" id="AH1475">
    <property type="entry name" value="AH1475"/>
</dbReference>
<dbReference type="RefSeq" id="WP_010990347.1">
    <property type="nucleotide sequence ID" value="NC_003212.1"/>
</dbReference>
<dbReference type="SMR" id="Q92EW5"/>
<dbReference type="STRING" id="272626.gene:17564670"/>
<dbReference type="KEGG" id="lin:lin0343"/>
<dbReference type="eggNOG" id="COG0352">
    <property type="taxonomic scope" value="Bacteria"/>
</dbReference>
<dbReference type="HOGENOM" id="CLU_018272_3_2_9"/>
<dbReference type="OrthoDB" id="9812206at2"/>
<dbReference type="UniPathway" id="UPA00060">
    <property type="reaction ID" value="UER00141"/>
</dbReference>
<dbReference type="Proteomes" id="UP000002513">
    <property type="component" value="Chromosome"/>
</dbReference>
<dbReference type="GO" id="GO:0005737">
    <property type="term" value="C:cytoplasm"/>
    <property type="evidence" value="ECO:0007669"/>
    <property type="project" value="TreeGrafter"/>
</dbReference>
<dbReference type="GO" id="GO:0000287">
    <property type="term" value="F:magnesium ion binding"/>
    <property type="evidence" value="ECO:0007669"/>
    <property type="project" value="UniProtKB-UniRule"/>
</dbReference>
<dbReference type="GO" id="GO:0004789">
    <property type="term" value="F:thiamine-phosphate diphosphorylase activity"/>
    <property type="evidence" value="ECO:0007669"/>
    <property type="project" value="UniProtKB-UniRule"/>
</dbReference>
<dbReference type="GO" id="GO:0009228">
    <property type="term" value="P:thiamine biosynthetic process"/>
    <property type="evidence" value="ECO:0007669"/>
    <property type="project" value="UniProtKB-KW"/>
</dbReference>
<dbReference type="GO" id="GO:0009229">
    <property type="term" value="P:thiamine diphosphate biosynthetic process"/>
    <property type="evidence" value="ECO:0007669"/>
    <property type="project" value="UniProtKB-UniRule"/>
</dbReference>
<dbReference type="CDD" id="cd00564">
    <property type="entry name" value="TMP_TenI"/>
    <property type="match status" value="1"/>
</dbReference>
<dbReference type="FunFam" id="3.20.20.70:FF:000096">
    <property type="entry name" value="Thiamine-phosphate synthase"/>
    <property type="match status" value="1"/>
</dbReference>
<dbReference type="Gene3D" id="3.20.20.70">
    <property type="entry name" value="Aldolase class I"/>
    <property type="match status" value="1"/>
</dbReference>
<dbReference type="HAMAP" id="MF_00097">
    <property type="entry name" value="TMP_synthase"/>
    <property type="match status" value="1"/>
</dbReference>
<dbReference type="InterPro" id="IPR013785">
    <property type="entry name" value="Aldolase_TIM"/>
</dbReference>
<dbReference type="InterPro" id="IPR036206">
    <property type="entry name" value="ThiamineP_synth_sf"/>
</dbReference>
<dbReference type="InterPro" id="IPR022998">
    <property type="entry name" value="ThiamineP_synth_TenI"/>
</dbReference>
<dbReference type="InterPro" id="IPR034291">
    <property type="entry name" value="TMP_synthase"/>
</dbReference>
<dbReference type="NCBIfam" id="TIGR00693">
    <property type="entry name" value="thiE"/>
    <property type="match status" value="1"/>
</dbReference>
<dbReference type="PANTHER" id="PTHR20857">
    <property type="entry name" value="THIAMINE-PHOSPHATE PYROPHOSPHORYLASE"/>
    <property type="match status" value="1"/>
</dbReference>
<dbReference type="PANTHER" id="PTHR20857:SF15">
    <property type="entry name" value="THIAMINE-PHOSPHATE SYNTHASE"/>
    <property type="match status" value="1"/>
</dbReference>
<dbReference type="Pfam" id="PF02581">
    <property type="entry name" value="TMP-TENI"/>
    <property type="match status" value="1"/>
</dbReference>
<dbReference type="SUPFAM" id="SSF51391">
    <property type="entry name" value="Thiamin phosphate synthase"/>
    <property type="match status" value="1"/>
</dbReference>
<comment type="function">
    <text evidence="1">Condenses 4-methyl-5-(beta-hydroxyethyl)thiazole monophosphate (THZ-P) and 2-methyl-4-amino-5-hydroxymethyl pyrimidine pyrophosphate (HMP-PP) to form thiamine monophosphate (TMP).</text>
</comment>
<comment type="catalytic activity">
    <reaction evidence="1">
        <text>2-[(2R,5Z)-2-carboxy-4-methylthiazol-5(2H)-ylidene]ethyl phosphate + 4-amino-2-methyl-5-(diphosphooxymethyl)pyrimidine + 2 H(+) = thiamine phosphate + CO2 + diphosphate</text>
        <dbReference type="Rhea" id="RHEA:47844"/>
        <dbReference type="ChEBI" id="CHEBI:15378"/>
        <dbReference type="ChEBI" id="CHEBI:16526"/>
        <dbReference type="ChEBI" id="CHEBI:33019"/>
        <dbReference type="ChEBI" id="CHEBI:37575"/>
        <dbReference type="ChEBI" id="CHEBI:57841"/>
        <dbReference type="ChEBI" id="CHEBI:62899"/>
        <dbReference type="EC" id="2.5.1.3"/>
    </reaction>
</comment>
<comment type="catalytic activity">
    <reaction evidence="1">
        <text>2-(2-carboxy-4-methylthiazol-5-yl)ethyl phosphate + 4-amino-2-methyl-5-(diphosphooxymethyl)pyrimidine + 2 H(+) = thiamine phosphate + CO2 + diphosphate</text>
        <dbReference type="Rhea" id="RHEA:47848"/>
        <dbReference type="ChEBI" id="CHEBI:15378"/>
        <dbReference type="ChEBI" id="CHEBI:16526"/>
        <dbReference type="ChEBI" id="CHEBI:33019"/>
        <dbReference type="ChEBI" id="CHEBI:37575"/>
        <dbReference type="ChEBI" id="CHEBI:57841"/>
        <dbReference type="ChEBI" id="CHEBI:62890"/>
        <dbReference type="EC" id="2.5.1.3"/>
    </reaction>
</comment>
<comment type="catalytic activity">
    <reaction evidence="1">
        <text>4-methyl-5-(2-phosphooxyethyl)-thiazole + 4-amino-2-methyl-5-(diphosphooxymethyl)pyrimidine + H(+) = thiamine phosphate + diphosphate</text>
        <dbReference type="Rhea" id="RHEA:22328"/>
        <dbReference type="ChEBI" id="CHEBI:15378"/>
        <dbReference type="ChEBI" id="CHEBI:33019"/>
        <dbReference type="ChEBI" id="CHEBI:37575"/>
        <dbReference type="ChEBI" id="CHEBI:57841"/>
        <dbReference type="ChEBI" id="CHEBI:58296"/>
        <dbReference type="EC" id="2.5.1.3"/>
    </reaction>
</comment>
<comment type="cofactor">
    <cofactor evidence="1">
        <name>Mg(2+)</name>
        <dbReference type="ChEBI" id="CHEBI:18420"/>
    </cofactor>
    <text evidence="1">Binds 1 Mg(2+) ion per subunit.</text>
</comment>
<comment type="pathway">
    <text evidence="1">Cofactor biosynthesis; thiamine diphosphate biosynthesis; thiamine phosphate from 4-amino-2-methyl-5-diphosphomethylpyrimidine and 4-methyl-5-(2-phosphoethyl)-thiazole: step 1/1.</text>
</comment>
<comment type="similarity">
    <text evidence="1">Belongs to the thiamine-phosphate synthase family.</text>
</comment>
<reference key="1">
    <citation type="journal article" date="2001" name="Science">
        <title>Comparative genomics of Listeria species.</title>
        <authorList>
            <person name="Glaser P."/>
            <person name="Frangeul L."/>
            <person name="Buchrieser C."/>
            <person name="Rusniok C."/>
            <person name="Amend A."/>
            <person name="Baquero F."/>
            <person name="Berche P."/>
            <person name="Bloecker H."/>
            <person name="Brandt P."/>
            <person name="Chakraborty T."/>
            <person name="Charbit A."/>
            <person name="Chetouani F."/>
            <person name="Couve E."/>
            <person name="de Daruvar A."/>
            <person name="Dehoux P."/>
            <person name="Domann E."/>
            <person name="Dominguez-Bernal G."/>
            <person name="Duchaud E."/>
            <person name="Durant L."/>
            <person name="Dussurget O."/>
            <person name="Entian K.-D."/>
            <person name="Fsihi H."/>
            <person name="Garcia-del Portillo F."/>
            <person name="Garrido P."/>
            <person name="Gautier L."/>
            <person name="Goebel W."/>
            <person name="Gomez-Lopez N."/>
            <person name="Hain T."/>
            <person name="Hauf J."/>
            <person name="Jackson D."/>
            <person name="Jones L.-M."/>
            <person name="Kaerst U."/>
            <person name="Kreft J."/>
            <person name="Kuhn M."/>
            <person name="Kunst F."/>
            <person name="Kurapkat G."/>
            <person name="Madueno E."/>
            <person name="Maitournam A."/>
            <person name="Mata Vicente J."/>
            <person name="Ng E."/>
            <person name="Nedjari H."/>
            <person name="Nordsiek G."/>
            <person name="Novella S."/>
            <person name="de Pablos B."/>
            <person name="Perez-Diaz J.-C."/>
            <person name="Purcell R."/>
            <person name="Remmel B."/>
            <person name="Rose M."/>
            <person name="Schlueter T."/>
            <person name="Simoes N."/>
            <person name="Tierrez A."/>
            <person name="Vazquez-Boland J.-A."/>
            <person name="Voss H."/>
            <person name="Wehland J."/>
            <person name="Cossart P."/>
        </authorList>
    </citation>
    <scope>NUCLEOTIDE SEQUENCE [LARGE SCALE GENOMIC DNA]</scope>
    <source>
        <strain>ATCC BAA-680 / CLIP 11262</strain>
    </source>
</reference>
<accession>Q92EW5</accession>
<feature type="chain" id="PRO_0000157021" description="Thiamine-phosphate synthase">
    <location>
        <begin position="1"/>
        <end position="214"/>
    </location>
</feature>
<feature type="binding site" evidence="1">
    <location>
        <begin position="37"/>
        <end position="41"/>
    </location>
    <ligand>
        <name>4-amino-2-methyl-5-(diphosphooxymethyl)pyrimidine</name>
        <dbReference type="ChEBI" id="CHEBI:57841"/>
    </ligand>
</feature>
<feature type="binding site" evidence="1">
    <location>
        <position position="73"/>
    </location>
    <ligand>
        <name>4-amino-2-methyl-5-(diphosphooxymethyl)pyrimidine</name>
        <dbReference type="ChEBI" id="CHEBI:57841"/>
    </ligand>
</feature>
<feature type="binding site" evidence="1">
    <location>
        <position position="74"/>
    </location>
    <ligand>
        <name>Mg(2+)</name>
        <dbReference type="ChEBI" id="CHEBI:18420"/>
    </ligand>
</feature>
<feature type="binding site" evidence="1">
    <location>
        <position position="93"/>
    </location>
    <ligand>
        <name>Mg(2+)</name>
        <dbReference type="ChEBI" id="CHEBI:18420"/>
    </ligand>
</feature>
<feature type="binding site" evidence="1">
    <location>
        <position position="112"/>
    </location>
    <ligand>
        <name>4-amino-2-methyl-5-(diphosphooxymethyl)pyrimidine</name>
        <dbReference type="ChEBI" id="CHEBI:57841"/>
    </ligand>
</feature>
<feature type="binding site" evidence="1">
    <location>
        <begin position="139"/>
        <end position="141"/>
    </location>
    <ligand>
        <name>2-[(2R,5Z)-2-carboxy-4-methylthiazol-5(2H)-ylidene]ethyl phosphate</name>
        <dbReference type="ChEBI" id="CHEBI:62899"/>
    </ligand>
</feature>
<feature type="binding site" evidence="1">
    <location>
        <position position="142"/>
    </location>
    <ligand>
        <name>4-amino-2-methyl-5-(diphosphooxymethyl)pyrimidine</name>
        <dbReference type="ChEBI" id="CHEBI:57841"/>
    </ligand>
</feature>
<feature type="binding site" evidence="1">
    <location>
        <position position="171"/>
    </location>
    <ligand>
        <name>2-[(2R,5Z)-2-carboxy-4-methylthiazol-5(2H)-ylidene]ethyl phosphate</name>
        <dbReference type="ChEBI" id="CHEBI:62899"/>
    </ligand>
</feature>
<feature type="binding site" evidence="1">
    <location>
        <begin position="191"/>
        <end position="192"/>
    </location>
    <ligand>
        <name>2-[(2R,5Z)-2-carboxy-4-methylthiazol-5(2H)-ylidene]ethyl phosphate</name>
        <dbReference type="ChEBI" id="CHEBI:62899"/>
    </ligand>
</feature>
<evidence type="ECO:0000255" key="1">
    <source>
        <dbReference type="HAMAP-Rule" id="MF_00097"/>
    </source>
</evidence>